<gene>
    <name type="primary">QPCT</name>
</gene>
<keyword id="KW-0012">Acyltransferase</keyword>
<keyword id="KW-1015">Disulfide bond</keyword>
<keyword id="KW-0325">Glycoprotein</keyword>
<keyword id="KW-0479">Metal-binding</keyword>
<keyword id="KW-0964">Secreted</keyword>
<keyword id="KW-0732">Signal</keyword>
<keyword id="KW-0808">Transferase</keyword>
<keyword id="KW-0862">Zinc</keyword>
<dbReference type="EC" id="2.3.2.5"/>
<dbReference type="EMBL" id="AB014769">
    <property type="protein sequence ID" value="BAA34290.1"/>
    <property type="molecule type" value="mRNA"/>
</dbReference>
<dbReference type="SMR" id="Q9YIB5"/>
<dbReference type="MEROPS" id="M28.974"/>
<dbReference type="GlyCosmos" id="Q9YIB5">
    <property type="glycosylation" value="4 sites, No reported glycans"/>
</dbReference>
<dbReference type="GO" id="GO:0005576">
    <property type="term" value="C:extracellular region"/>
    <property type="evidence" value="ECO:0007669"/>
    <property type="project" value="UniProtKB-SubCell"/>
</dbReference>
<dbReference type="GO" id="GO:0016603">
    <property type="term" value="F:glutaminyl-peptide cyclotransferase activity"/>
    <property type="evidence" value="ECO:0000250"/>
    <property type="project" value="UniProtKB"/>
</dbReference>
<dbReference type="GO" id="GO:0008270">
    <property type="term" value="F:zinc ion binding"/>
    <property type="evidence" value="ECO:0000250"/>
    <property type="project" value="UniProtKB"/>
</dbReference>
<dbReference type="GO" id="GO:0017186">
    <property type="term" value="P:peptidyl-pyroglutamic acid biosynthetic process, using glutaminyl-peptide cyclotransferase"/>
    <property type="evidence" value="ECO:0000250"/>
    <property type="project" value="UniProtKB"/>
</dbReference>
<dbReference type="CDD" id="cd03880">
    <property type="entry name" value="M28_QC_like"/>
    <property type="match status" value="1"/>
</dbReference>
<dbReference type="FunFam" id="3.40.630.10:FF:000029">
    <property type="entry name" value="Glutaminyl-peptide cyclotransferase"/>
    <property type="match status" value="1"/>
</dbReference>
<dbReference type="Gene3D" id="3.40.630.10">
    <property type="entry name" value="Zn peptidases"/>
    <property type="match status" value="1"/>
</dbReference>
<dbReference type="InterPro" id="IPR037457">
    <property type="entry name" value="M28_QC"/>
</dbReference>
<dbReference type="InterPro" id="IPR007484">
    <property type="entry name" value="Peptidase_M28"/>
</dbReference>
<dbReference type="InterPro" id="IPR040234">
    <property type="entry name" value="QC/QCL"/>
</dbReference>
<dbReference type="PANTHER" id="PTHR12283">
    <property type="entry name" value="GLUTAMINYL-PEPTIDE CYCLOTRANSFERASE"/>
    <property type="match status" value="1"/>
</dbReference>
<dbReference type="PANTHER" id="PTHR12283:SF5">
    <property type="entry name" value="GLUTAMINYL-PEPTIDE CYCLOTRANSFERASE"/>
    <property type="match status" value="1"/>
</dbReference>
<dbReference type="Pfam" id="PF04389">
    <property type="entry name" value="Peptidase_M28"/>
    <property type="match status" value="1"/>
</dbReference>
<dbReference type="SUPFAM" id="SSF53187">
    <property type="entry name" value="Zn-dependent exopeptidases"/>
    <property type="match status" value="1"/>
</dbReference>
<evidence type="ECO:0000250" key="1"/>
<evidence type="ECO:0000250" key="2">
    <source>
        <dbReference type="UniProtKB" id="B7QK46"/>
    </source>
</evidence>
<evidence type="ECO:0000250" key="3">
    <source>
        <dbReference type="UniProtKB" id="Q16769"/>
    </source>
</evidence>
<evidence type="ECO:0000255" key="4"/>
<evidence type="ECO:0000305" key="5"/>
<comment type="function">
    <text evidence="1">Responsible for the biosynthesis of pyroglutamyl peptides. Has a bias against acidic and tryptophan residues adjacent to the N-terminal glutaminyl residue and a lack of importance of chain length after the second residue. Also catalyzes N-terminal pyroglutamate formation (By similarity).</text>
</comment>
<comment type="catalytic activity">
    <reaction>
        <text>N-terminal L-glutaminyl-[peptide] = N-terminal 5-oxo-L-prolyl-[peptide] + NH4(+)</text>
        <dbReference type="Rhea" id="RHEA:23652"/>
        <dbReference type="Rhea" id="RHEA-COMP:11736"/>
        <dbReference type="Rhea" id="RHEA-COMP:11846"/>
        <dbReference type="ChEBI" id="CHEBI:28938"/>
        <dbReference type="ChEBI" id="CHEBI:64722"/>
        <dbReference type="ChEBI" id="CHEBI:87215"/>
        <dbReference type="EC" id="2.3.2.5"/>
    </reaction>
</comment>
<comment type="subcellular location">
    <subcellularLocation>
        <location evidence="1">Secreted</location>
    </subcellularLocation>
</comment>
<comment type="tissue specificity">
    <text>Expressed by the venom gland.</text>
</comment>
<comment type="similarity">
    <text evidence="5">Belongs to the glutaminyl-peptide cyclotransferase family.</text>
</comment>
<comment type="caution">
    <text evidence="2 3">It is unclear whether this protein requires a metal cofactor for catalysis. It was originally proposed to be a Zn(2+)-dependent metalloenzyme based on structural similarities to bacterial aminopeptidases and the observation that it can bind Zn(2+) ions, typically in a 1:1 stoichiometry (By similarity). However, a recent study suggests a Zn(2+)-independent catalytic mechanism (By similarity).</text>
</comment>
<feature type="signal peptide" evidence="4">
    <location>
        <begin position="1"/>
        <end position="23"/>
    </location>
</feature>
<feature type="chain" id="PRO_0000407858" description="Glutaminyl-peptide cyclotransferase">
    <location>
        <begin position="24"/>
        <end position="368"/>
    </location>
</feature>
<feature type="active site" description="Proton acceptor" evidence="3">
    <location>
        <position position="207"/>
    </location>
</feature>
<feature type="active site" description="Proton acceptor" evidence="3">
    <location>
        <position position="254"/>
    </location>
</feature>
<feature type="binding site" evidence="3">
    <location>
        <position position="164"/>
    </location>
    <ligand>
        <name>Zn(2+)</name>
        <dbReference type="ChEBI" id="CHEBI:29105"/>
    </ligand>
</feature>
<feature type="binding site" evidence="3">
    <location>
        <position position="208"/>
    </location>
    <ligand>
        <name>Zn(2+)</name>
        <dbReference type="ChEBI" id="CHEBI:29105"/>
    </ligand>
</feature>
<feature type="binding site" evidence="3">
    <location>
        <position position="336"/>
    </location>
    <ligand>
        <name>Zn(2+)</name>
        <dbReference type="ChEBI" id="CHEBI:29105"/>
    </ligand>
</feature>
<feature type="glycosylation site" description="N-linked (GlcNAc...) asparagine" evidence="4">
    <location>
        <position position="53"/>
    </location>
</feature>
<feature type="glycosylation site" description="N-linked (GlcNAc...) asparagine" evidence="4">
    <location>
        <position position="65"/>
    </location>
</feature>
<feature type="glycosylation site" description="N-linked (GlcNAc...) asparagine" evidence="4">
    <location>
        <position position="292"/>
    </location>
</feature>
<feature type="glycosylation site" description="N-linked (GlcNAc...) asparagine" evidence="4">
    <location>
        <position position="352"/>
    </location>
</feature>
<feature type="disulfide bond" evidence="3">
    <location>
        <begin position="143"/>
        <end position="169"/>
    </location>
</feature>
<reference key="1">
    <citation type="submission" date="1998-05" db="EMBL/GenBank/DDBJ databases">
        <title>Bothrops jararaca mRNA for glutaminyl cyclase.</title>
        <authorList>
            <person name="Murayama N."/>
            <person name="Ohnuma M."/>
        </authorList>
    </citation>
    <scope>NUCLEOTIDE SEQUENCE [MRNA]</scope>
    <source>
        <tissue>Venom gland</tissue>
    </source>
</reference>
<sequence length="368" mass="42204">MARERRDSKAATFFCLAWALCLALPGYPQHVSGREDRADWTQEKYSHRPTILNATCILQVTSQTNVSRMWQNDLHPILIERYPGSPGSYAVRQHIKHRLQGLQAGWLVEEDTFQSHTPYGYRTFSNIISTLNPLAKRHLVIACHYDSKYFPPQLDGKVFVGATDSAVPCAMMLELARSLDRPLSFLKQSSLPPKADLSLKLIFFDGEEAFVRWSPSDSLYGSRSLAQKMASTPHPPGARNTYQIRGIDLFVLLDLIGARNPVFPVYFLNTARWFGRLEAIERNLNDLGLLNNYSSERQYFRSNLRRHPVEDDHIPFLRRGVPILHLIPSPFPRVWHTMEDNEENLDKPTIDNLSKILQVFVLEYLNLG</sequence>
<proteinExistence type="evidence at transcript level"/>
<organism>
    <name type="scientific">Bothrops jararaca</name>
    <name type="common">Jararaca</name>
    <name type="synonym">Bothrops jajaraca</name>
    <dbReference type="NCBI Taxonomy" id="8724"/>
    <lineage>
        <taxon>Eukaryota</taxon>
        <taxon>Metazoa</taxon>
        <taxon>Chordata</taxon>
        <taxon>Craniata</taxon>
        <taxon>Vertebrata</taxon>
        <taxon>Euteleostomi</taxon>
        <taxon>Lepidosauria</taxon>
        <taxon>Squamata</taxon>
        <taxon>Bifurcata</taxon>
        <taxon>Unidentata</taxon>
        <taxon>Episquamata</taxon>
        <taxon>Toxicofera</taxon>
        <taxon>Serpentes</taxon>
        <taxon>Colubroidea</taxon>
        <taxon>Viperidae</taxon>
        <taxon>Crotalinae</taxon>
        <taxon>Bothrops</taxon>
    </lineage>
</organism>
<name>QPCT_BOTJA</name>
<protein>
    <recommendedName>
        <fullName>Glutaminyl-peptide cyclotransferase</fullName>
        <ecNumber>2.3.2.5</ecNumber>
    </recommendedName>
    <alternativeName>
        <fullName>Glutaminyl cyclase</fullName>
        <shortName>QC</shortName>
    </alternativeName>
    <alternativeName>
        <fullName>Glutaminyl-tRNA cyclotransferase</fullName>
    </alternativeName>
</protein>
<accession>Q9YIB5</accession>